<proteinExistence type="evidence at protein level"/>
<gene>
    <name type="primary">ycjS</name>
    <name type="ordered locus">b1315</name>
    <name type="ordered locus">JW1308</name>
</gene>
<organism>
    <name type="scientific">Escherichia coli (strain K12)</name>
    <dbReference type="NCBI Taxonomy" id="83333"/>
    <lineage>
        <taxon>Bacteria</taxon>
        <taxon>Pseudomonadati</taxon>
        <taxon>Pseudomonadota</taxon>
        <taxon>Gammaproteobacteria</taxon>
        <taxon>Enterobacterales</taxon>
        <taxon>Enterobacteriaceae</taxon>
        <taxon>Escherichia</taxon>
    </lineage>
</organism>
<accession>P77503</accession>
<name>YCJS_ECOLI</name>
<evidence type="ECO:0000269" key="1">
    <source>
    </source>
</evidence>
<evidence type="ECO:0000305" key="2"/>
<evidence type="ECO:0000305" key="3">
    <source>
    </source>
</evidence>
<dbReference type="EC" id="1.1.1.-" evidence="1"/>
<dbReference type="EMBL" id="U00096">
    <property type="protein sequence ID" value="AAC74397.1"/>
    <property type="molecule type" value="Genomic_DNA"/>
</dbReference>
<dbReference type="EMBL" id="AP009048">
    <property type="protein sequence ID" value="BAA14890.1"/>
    <property type="molecule type" value="Genomic_DNA"/>
</dbReference>
<dbReference type="PIR" id="F64880">
    <property type="entry name" value="F64880"/>
</dbReference>
<dbReference type="RefSeq" id="NP_415831.1">
    <property type="nucleotide sequence ID" value="NC_000913.3"/>
</dbReference>
<dbReference type="RefSeq" id="WP_001395397.1">
    <property type="nucleotide sequence ID" value="NZ_LN832404.1"/>
</dbReference>
<dbReference type="SMR" id="P77503"/>
<dbReference type="BioGRID" id="4263193">
    <property type="interactions" value="13"/>
</dbReference>
<dbReference type="FunCoup" id="P77503">
    <property type="interactions" value="164"/>
</dbReference>
<dbReference type="IntAct" id="P77503">
    <property type="interactions" value="1"/>
</dbReference>
<dbReference type="STRING" id="511145.b1315"/>
<dbReference type="PaxDb" id="511145-b1315"/>
<dbReference type="EnsemblBacteria" id="AAC74397">
    <property type="protein sequence ID" value="AAC74397"/>
    <property type="gene ID" value="b1315"/>
</dbReference>
<dbReference type="GeneID" id="948589"/>
<dbReference type="KEGG" id="ecj:JW1308"/>
<dbReference type="KEGG" id="eco:b1315"/>
<dbReference type="KEGG" id="ecoc:C3026_07705"/>
<dbReference type="PATRIC" id="fig|1411691.4.peg.964"/>
<dbReference type="EchoBASE" id="EB3675"/>
<dbReference type="eggNOG" id="COG0673">
    <property type="taxonomic scope" value="Bacteria"/>
</dbReference>
<dbReference type="HOGENOM" id="CLU_023194_1_4_6"/>
<dbReference type="InParanoid" id="P77503"/>
<dbReference type="OMA" id="PDKPWFY"/>
<dbReference type="OrthoDB" id="9801953at2"/>
<dbReference type="PhylomeDB" id="P77503"/>
<dbReference type="BioCyc" id="EcoCyc:G6653-MONOMER"/>
<dbReference type="BioCyc" id="MetaCyc:G6653-MONOMER"/>
<dbReference type="PRO" id="PR:P77503"/>
<dbReference type="Proteomes" id="UP000000625">
    <property type="component" value="Chromosome"/>
</dbReference>
<dbReference type="GO" id="GO:0000166">
    <property type="term" value="F:nucleotide binding"/>
    <property type="evidence" value="ECO:0007669"/>
    <property type="project" value="InterPro"/>
</dbReference>
<dbReference type="GO" id="GO:0016616">
    <property type="term" value="F:oxidoreductase activity, acting on the CH-OH group of donors, NAD or NADP as acceptor"/>
    <property type="evidence" value="ECO:0000314"/>
    <property type="project" value="EcoCyc"/>
</dbReference>
<dbReference type="Gene3D" id="3.30.360.10">
    <property type="entry name" value="Dihydrodipicolinate Reductase, domain 2"/>
    <property type="match status" value="1"/>
</dbReference>
<dbReference type="Gene3D" id="3.40.50.720">
    <property type="entry name" value="NAD(P)-binding Rossmann-like Domain"/>
    <property type="match status" value="1"/>
</dbReference>
<dbReference type="InterPro" id="IPR004104">
    <property type="entry name" value="Gfo/Idh/MocA-like_OxRdtase_C"/>
</dbReference>
<dbReference type="InterPro" id="IPR000683">
    <property type="entry name" value="Gfo/Idh/MocA-like_OxRdtase_N"/>
</dbReference>
<dbReference type="InterPro" id="IPR052515">
    <property type="entry name" value="Gfo/Idh/MocA_Oxidoreductase"/>
</dbReference>
<dbReference type="InterPro" id="IPR036291">
    <property type="entry name" value="NAD(P)-bd_dom_sf"/>
</dbReference>
<dbReference type="PANTHER" id="PTHR43249:SF1">
    <property type="entry name" value="D-GLUCOSIDE 3-DEHYDROGENASE"/>
    <property type="match status" value="1"/>
</dbReference>
<dbReference type="PANTHER" id="PTHR43249">
    <property type="entry name" value="UDP-N-ACETYL-2-AMINO-2-DEOXY-D-GLUCURONATE OXIDASE"/>
    <property type="match status" value="1"/>
</dbReference>
<dbReference type="Pfam" id="PF01408">
    <property type="entry name" value="GFO_IDH_MocA"/>
    <property type="match status" value="1"/>
</dbReference>
<dbReference type="Pfam" id="PF02894">
    <property type="entry name" value="GFO_IDH_MocA_C"/>
    <property type="match status" value="1"/>
</dbReference>
<dbReference type="SUPFAM" id="SSF55347">
    <property type="entry name" value="Glyceraldehyde-3-phosphate dehydrogenase-like, C-terminal domain"/>
    <property type="match status" value="1"/>
</dbReference>
<dbReference type="SUPFAM" id="SSF51735">
    <property type="entry name" value="NAD(P)-binding Rossmann-fold domains"/>
    <property type="match status" value="1"/>
</dbReference>
<keyword id="KW-0119">Carbohydrate metabolism</keyword>
<keyword id="KW-0520">NAD</keyword>
<keyword id="KW-0560">Oxidoreductase</keyword>
<keyword id="KW-1185">Reference proteome</keyword>
<feature type="chain" id="PRO_0000091779" description="D-glucoside 3-dehydrogenase">
    <location>
        <begin position="1"/>
        <end position="351"/>
    </location>
</feature>
<comment type="function">
    <text evidence="1">Catalyzes the NADH-dependent reduction of the oxo group at C3 of 3-dehydro-D-glucosides leading to D-glucosides. Probably functions in a metabolic pathway that transforms D-gulosides to D-glucosides. Can use 3-dehydro-D-glucose, methyl alpha-3-dehydro-D-glucoside and methyl beta-3-dehydro-D-glucoside as substrates in vitro. However, the actual specific physiological substrates for this metabolic pathway are unknown. To a lesser extent, is also able to catalyze the reverse reactions, i.e. the NAD(+)-dependent oxidation of the hydroxyl group at C3 of D-glucosides leading to 3-dehydro-D-glucosides. Cannot act on UDP-glucose, UDP-N-acetyl-D-glucosamine, D-glucosamine, N-acetyl-D-glucosamine, or UDP-D-galactose.</text>
</comment>
<comment type="catalytic activity">
    <reaction evidence="1">
        <text>a D-glucoside + NAD(+) = a 3-dehydro-D-glucoside + NADH + H(+)</text>
        <dbReference type="Rhea" id="RHEA:61724"/>
        <dbReference type="ChEBI" id="CHEBI:15378"/>
        <dbReference type="ChEBI" id="CHEBI:35436"/>
        <dbReference type="ChEBI" id="CHEBI:57540"/>
        <dbReference type="ChEBI" id="CHEBI:57945"/>
        <dbReference type="ChEBI" id="CHEBI:145017"/>
    </reaction>
</comment>
<comment type="biophysicochemical properties">
    <kinetics>
        <KM evidence="1">7.2 mM for D-glucose (at pH 8.0 and 30 degrees Celsius)</KM>
        <KM evidence="1">8.9 mM for D-glucose (at pH 9.0 and 30 degrees Celsius)</KM>
        <KM evidence="1">5.6 mM for methyl alpha-D-glucoside (at pH 8.0 and 30 degrees Celsius)</KM>
        <KM evidence="1">5.9 mM for methyl alpha-D-glucoside (at pH 9.0 and 30 degrees Celsius)</KM>
        <KM evidence="1">2 mM for methyl beta-D-glucoside (at pH 8.0 and 30 degrees Celsius)</KM>
        <KM evidence="1">1.6 mM for methyl beta-D-glucoside (at pH 9.0 and 30 degrees Celsius)</KM>
        <KM evidence="1">2.1 mM for 1,5-anhydro-D-glucitol (at pH 8.0 and 30 degrees Celsius)</KM>
        <KM evidence="1">3.9 mM for 1,5-anhydro-D-glucitol (at pH 9.0 and 30 degrees Celsius)</KM>
        <KM evidence="1">0.5 mM for 3-dehydro-D-glucose (at pH 6.5 and 30 degrees Celsius)</KM>
        <KM evidence="1">0.95 mM for methyl alpha-3-dehydro-D-glucoside (at pH 7.0 and 30 degrees Celsius)</KM>
        <KM evidence="1">1.2 mM for methyl alpha-3-dehydro-D-glucoside (at pH 8.0 and 30 degrees Celsius)</KM>
        <KM evidence="1">0.8 mM for methyl beta-3-dehydro-D-glucoside (at pH 7.0 and 30 degrees Celsius)</KM>
        <KM evidence="1">0.92 mM for methyl beta-3-dehydro-D-glucoside (at pH 8.0 and 30 degrees Celsius)</KM>
        <text evidence="1">kcat is 0.65 sec(-1) for the NAD(+)-dependent oxidation of D-glucose (at pH 8.0 and 30 degrees Celsius). kcat is 1.14 sec(-1) for the NAD(+)-dependent oxidation of D-glucose (at pH 9.0 and 30 degrees Celsius). kcat is 0.58 sec(-1) for the NAD(+)-dependent oxidation of methyl alpha-D-glucoside (at pH 8.0 and 30 degrees Celsius). kcat is 1.2 sec(-1) for the NAD(+)-dependent oxidation of methyl alpha-D-glucoside (at pH 9.0 and 30 degrees Celsius). kcat is 0.4 sec(-1) for the NAD(+)-dependent oxidation of methyl beta-D-glucoside (at pH 8.0 and 30 degrees Celsius). kcat is 0.3 sec(-1) for the NAD(+)-dependent oxidation of methyl beta-D-glucoside (at pH 9.0 and 30 degrees Celsius). kcat is 0.17 sec(-1) for the NAD(+)-dependent oxidation of 1,5-anhydro-D-glucitol (at pH 8.0 and 30 degrees Celsius). kcat is 0.4 sec(-1) for the NAD(+)-dependent oxidation of 1,5-anhydro-D-glucitol (at pH 9.0 and 30 degrees Celsius). kcat is 4.7 sec(-1) for the NADH-dependent reduction of 3-dehydro-D-glucose (at pH 6.5 and 30 degrees Celsius). kcat is 22 sec(-1) for the NADH-dependent reduction of methyl alpha-3-dehydro-D-glucoside (at pH 7.0 and 30 degrees Celsius). kcat is 18 sec(-1) for the NADH-dependent reduction of methyl alpha-3-dehydro-D-glucoside (at pH 8.0 and 30 degrees Celsius). kcat is 19 sec(-1) for the NADH-dependent reduction of methyl beta-3-dehydro-D-glucoside (at pH 7.0 and 30 degrees Celsius). kcat is 12.5 sec(-1) for the NADH-dependent reduction of methyl beta-3-dehydro-D-glucoside (at pH 8.0 and 30 degrees Celsius).</text>
    </kinetics>
</comment>
<comment type="similarity">
    <text evidence="2">Belongs to the Gfo/Idh/MocA family.</text>
</comment>
<reference key="1">
    <citation type="journal article" date="1996" name="DNA Res.">
        <title>A 570-kb DNA sequence of the Escherichia coli K-12 genome corresponding to the 28.0-40.1 min region on the linkage map.</title>
        <authorList>
            <person name="Aiba H."/>
            <person name="Baba T."/>
            <person name="Fujita K."/>
            <person name="Hayashi K."/>
            <person name="Inada T."/>
            <person name="Isono K."/>
            <person name="Itoh T."/>
            <person name="Kasai H."/>
            <person name="Kashimoto K."/>
            <person name="Kimura S."/>
            <person name="Kitakawa M."/>
            <person name="Kitagawa M."/>
            <person name="Makino K."/>
            <person name="Miki T."/>
            <person name="Mizobuchi K."/>
            <person name="Mori H."/>
            <person name="Mori T."/>
            <person name="Motomura K."/>
            <person name="Nakade S."/>
            <person name="Nakamura Y."/>
            <person name="Nashimoto H."/>
            <person name="Nishio Y."/>
            <person name="Oshima T."/>
            <person name="Saito N."/>
            <person name="Sampei G."/>
            <person name="Seki Y."/>
            <person name="Sivasundaram S."/>
            <person name="Tagami H."/>
            <person name="Takeda J."/>
            <person name="Takemoto K."/>
            <person name="Takeuchi Y."/>
            <person name="Wada C."/>
            <person name="Yamamoto Y."/>
            <person name="Horiuchi T."/>
        </authorList>
    </citation>
    <scope>NUCLEOTIDE SEQUENCE [LARGE SCALE GENOMIC DNA]</scope>
    <source>
        <strain>K12 / W3110 / ATCC 27325 / DSM 5911</strain>
    </source>
</reference>
<reference key="2">
    <citation type="journal article" date="1997" name="Science">
        <title>The complete genome sequence of Escherichia coli K-12.</title>
        <authorList>
            <person name="Blattner F.R."/>
            <person name="Plunkett G. III"/>
            <person name="Bloch C.A."/>
            <person name="Perna N.T."/>
            <person name="Burland V."/>
            <person name="Riley M."/>
            <person name="Collado-Vides J."/>
            <person name="Glasner J.D."/>
            <person name="Rode C.K."/>
            <person name="Mayhew G.F."/>
            <person name="Gregor J."/>
            <person name="Davis N.W."/>
            <person name="Kirkpatrick H.A."/>
            <person name="Goeden M.A."/>
            <person name="Rose D.J."/>
            <person name="Mau B."/>
            <person name="Shao Y."/>
        </authorList>
    </citation>
    <scope>NUCLEOTIDE SEQUENCE [LARGE SCALE GENOMIC DNA]</scope>
    <source>
        <strain>K12 / MG1655 / ATCC 47076</strain>
    </source>
</reference>
<reference key="3">
    <citation type="journal article" date="2006" name="Mol. Syst. Biol.">
        <title>Highly accurate genome sequences of Escherichia coli K-12 strains MG1655 and W3110.</title>
        <authorList>
            <person name="Hayashi K."/>
            <person name="Morooka N."/>
            <person name="Yamamoto Y."/>
            <person name="Fujita K."/>
            <person name="Isono K."/>
            <person name="Choi S."/>
            <person name="Ohtsubo E."/>
            <person name="Baba T."/>
            <person name="Wanner B.L."/>
            <person name="Mori H."/>
            <person name="Horiuchi T."/>
        </authorList>
    </citation>
    <scope>NUCLEOTIDE SEQUENCE [LARGE SCALE GENOMIC DNA]</scope>
    <source>
        <strain>K12 / W3110 / ATCC 27325 / DSM 5911</strain>
    </source>
</reference>
<reference key="4">
    <citation type="journal article" date="2019" name="Biochemistry">
        <title>Functional Characterization of the ycjQRS Gene Cluster from Escherichia coli: A Novel Pathway for the Transformation of D-Gulosides to D-Glucosides.</title>
        <authorList>
            <person name="Mukherjee K."/>
            <person name="Huddleston J.P."/>
            <person name="Narindoshvili T."/>
            <person name="Nemmara V.V."/>
            <person name="Raushel F.M."/>
        </authorList>
    </citation>
    <scope>FUNCTION</scope>
    <scope>CATALYTIC ACTIVITY</scope>
    <scope>SUBSTRATE SPECIFICITY</scope>
    <scope>BIOPHYSICOCHEMICAL PROPERTIES</scope>
    <source>
        <strain>K12 / MG1655 / ATCC 47076</strain>
    </source>
</reference>
<sequence length="351" mass="38652">MKSAMTSSPLRVAIIGAGQVADKVHASYYCTRNDLELVAVCDSRLSQAQALAEKYGNASVWDDPQAMLLAVKPDVVSVCSPNRFHYEHTLMALEAGCHVMCEKPPAMTPEQAREMCDTARKLGKVLAYDFHHRFALDTQQLREQVTNGVLGEIYVTTARALRRCGVPGWGVFTNKELQGGGPLIDIGIHMLDAAMYVLGFPAVKSVNAHSFQKIGTQKSCGQFGEWDPATYSVEDSLFGTIEFHNGGILWLETSFALNIREQSIMNVSFCGDKAGATLFPAHIYTDNNGELMTLMQREIADDNRHLRSMEAFINHVQGKPVMIADAEQGYIIQQLVAALYQSAETGTRVEL</sequence>
<protein>
    <recommendedName>
        <fullName evidence="3">D-glucoside 3-dehydrogenase</fullName>
        <ecNumber evidence="1">1.1.1.-</ecNumber>
    </recommendedName>
</protein>